<organism>
    <name type="scientific">Caenorhabditis briggsae</name>
    <dbReference type="NCBI Taxonomy" id="6238"/>
    <lineage>
        <taxon>Eukaryota</taxon>
        <taxon>Metazoa</taxon>
        <taxon>Ecdysozoa</taxon>
        <taxon>Nematoda</taxon>
        <taxon>Chromadorea</taxon>
        <taxon>Rhabditida</taxon>
        <taxon>Rhabditina</taxon>
        <taxon>Rhabditomorpha</taxon>
        <taxon>Rhabditoidea</taxon>
        <taxon>Rhabditidae</taxon>
        <taxon>Peloderinae</taxon>
        <taxon>Caenorhabditis</taxon>
    </lineage>
</organism>
<accession>A8WXF6</accession>
<dbReference type="EC" id="2.7.11.17"/>
<dbReference type="EMBL" id="HE601251">
    <property type="protein sequence ID" value="CAP25104.1"/>
    <property type="molecule type" value="Genomic_DNA"/>
</dbReference>
<dbReference type="SMR" id="A8WXF6"/>
<dbReference type="FunCoup" id="A8WXF6">
    <property type="interactions" value="1094"/>
</dbReference>
<dbReference type="STRING" id="6238.A8WXF6"/>
<dbReference type="EnsemblMetazoa" id="CBG04391a.1">
    <property type="protein sequence ID" value="CBG04391a.1"/>
    <property type="gene ID" value="WBGene00027073"/>
</dbReference>
<dbReference type="KEGG" id="cbr:CBG_04391"/>
<dbReference type="CTD" id="8576389"/>
<dbReference type="WormBase" id="CBG04391a">
    <property type="protein sequence ID" value="CBP01170"/>
    <property type="gene ID" value="WBGene00027073"/>
    <property type="gene designation" value="Cbr-unc-43"/>
</dbReference>
<dbReference type="eggNOG" id="KOG0033">
    <property type="taxonomic scope" value="Eukaryota"/>
</dbReference>
<dbReference type="HOGENOM" id="CLU_000288_71_0_1"/>
<dbReference type="InParanoid" id="A8WXF6"/>
<dbReference type="OMA" id="MEFHRFY"/>
<dbReference type="Proteomes" id="UP000008549">
    <property type="component" value="Unassembled WGS sequence"/>
</dbReference>
<dbReference type="GO" id="GO:0030424">
    <property type="term" value="C:axon"/>
    <property type="evidence" value="ECO:0007669"/>
    <property type="project" value="UniProtKB-SubCell"/>
</dbReference>
<dbReference type="GO" id="GO:0005737">
    <property type="term" value="C:cytoplasm"/>
    <property type="evidence" value="ECO:0000318"/>
    <property type="project" value="GO_Central"/>
</dbReference>
<dbReference type="GO" id="GO:0043005">
    <property type="term" value="C:neuron projection"/>
    <property type="evidence" value="ECO:0000318"/>
    <property type="project" value="GO_Central"/>
</dbReference>
<dbReference type="GO" id="GO:0043204">
    <property type="term" value="C:perikaryon"/>
    <property type="evidence" value="ECO:0007669"/>
    <property type="project" value="UniProtKB-SubCell"/>
</dbReference>
<dbReference type="GO" id="GO:0014069">
    <property type="term" value="C:postsynaptic density"/>
    <property type="evidence" value="ECO:0000318"/>
    <property type="project" value="GO_Central"/>
</dbReference>
<dbReference type="GO" id="GO:0005524">
    <property type="term" value="F:ATP binding"/>
    <property type="evidence" value="ECO:0007669"/>
    <property type="project" value="UniProtKB-KW"/>
</dbReference>
<dbReference type="GO" id="GO:0004683">
    <property type="term" value="F:calcium/calmodulin-dependent protein kinase activity"/>
    <property type="evidence" value="ECO:0000318"/>
    <property type="project" value="GO_Central"/>
</dbReference>
<dbReference type="GO" id="GO:0005516">
    <property type="term" value="F:calmodulin binding"/>
    <property type="evidence" value="ECO:0000318"/>
    <property type="project" value="GO_Central"/>
</dbReference>
<dbReference type="GO" id="GO:0046872">
    <property type="term" value="F:metal ion binding"/>
    <property type="evidence" value="ECO:0007669"/>
    <property type="project" value="UniProtKB-KW"/>
</dbReference>
<dbReference type="GO" id="GO:0106310">
    <property type="term" value="F:protein serine kinase activity"/>
    <property type="evidence" value="ECO:0007669"/>
    <property type="project" value="RHEA"/>
</dbReference>
<dbReference type="GO" id="GO:0048168">
    <property type="term" value="P:regulation of neuronal synaptic plasticity"/>
    <property type="evidence" value="ECO:0000318"/>
    <property type="project" value="GO_Central"/>
</dbReference>
<dbReference type="GO" id="GO:1903076">
    <property type="term" value="P:regulation of protein localization to plasma membrane"/>
    <property type="evidence" value="ECO:0000318"/>
    <property type="project" value="GO_Central"/>
</dbReference>
<dbReference type="CDD" id="cd14086">
    <property type="entry name" value="STKc_CaMKII"/>
    <property type="match status" value="1"/>
</dbReference>
<dbReference type="FunFam" id="3.10.450.50:FF:000037">
    <property type="entry name" value="Calcium/calmodulin-dependent protein kinase type II"/>
    <property type="match status" value="1"/>
</dbReference>
<dbReference type="FunFam" id="1.10.510.10:FF:000001">
    <property type="entry name" value="Calcium/calmodulin-dependent protein kinase type II subunit delta"/>
    <property type="match status" value="1"/>
</dbReference>
<dbReference type="FunFam" id="3.30.200.20:FF:000002">
    <property type="entry name" value="Calcium/calmodulin-dependent protein kinase type II subunit delta isoform 2"/>
    <property type="match status" value="1"/>
</dbReference>
<dbReference type="Gene3D" id="3.10.450.50">
    <property type="match status" value="1"/>
</dbReference>
<dbReference type="Gene3D" id="6.10.140.620">
    <property type="match status" value="1"/>
</dbReference>
<dbReference type="Gene3D" id="3.30.200.20">
    <property type="entry name" value="Phosphorylase Kinase, domain 1"/>
    <property type="match status" value="1"/>
</dbReference>
<dbReference type="Gene3D" id="1.10.510.10">
    <property type="entry name" value="Transferase(Phosphotransferase) domain 1"/>
    <property type="match status" value="1"/>
</dbReference>
<dbReference type="InterPro" id="IPR013543">
    <property type="entry name" value="Ca/CaM-dep_prot_kinase-assoc"/>
</dbReference>
<dbReference type="InterPro" id="IPR011009">
    <property type="entry name" value="Kinase-like_dom_sf"/>
</dbReference>
<dbReference type="InterPro" id="IPR032710">
    <property type="entry name" value="NTF2-like_dom_sf"/>
</dbReference>
<dbReference type="InterPro" id="IPR000719">
    <property type="entry name" value="Prot_kinase_dom"/>
</dbReference>
<dbReference type="InterPro" id="IPR017441">
    <property type="entry name" value="Protein_kinase_ATP_BS"/>
</dbReference>
<dbReference type="InterPro" id="IPR008271">
    <property type="entry name" value="Ser/Thr_kinase_AS"/>
</dbReference>
<dbReference type="PANTHER" id="PTHR24347">
    <property type="entry name" value="SERINE/THREONINE-PROTEIN KINASE"/>
    <property type="match status" value="1"/>
</dbReference>
<dbReference type="Pfam" id="PF08332">
    <property type="entry name" value="CaMKII_AD"/>
    <property type="match status" value="1"/>
</dbReference>
<dbReference type="Pfam" id="PF00069">
    <property type="entry name" value="Pkinase"/>
    <property type="match status" value="1"/>
</dbReference>
<dbReference type="SMART" id="SM00220">
    <property type="entry name" value="S_TKc"/>
    <property type="match status" value="1"/>
</dbReference>
<dbReference type="SUPFAM" id="SSF54427">
    <property type="entry name" value="NTF2-like"/>
    <property type="match status" value="1"/>
</dbReference>
<dbReference type="SUPFAM" id="SSF56112">
    <property type="entry name" value="Protein kinase-like (PK-like)"/>
    <property type="match status" value="1"/>
</dbReference>
<dbReference type="PROSITE" id="PS00107">
    <property type="entry name" value="PROTEIN_KINASE_ATP"/>
    <property type="match status" value="1"/>
</dbReference>
<dbReference type="PROSITE" id="PS50011">
    <property type="entry name" value="PROTEIN_KINASE_DOM"/>
    <property type="match status" value="1"/>
</dbReference>
<dbReference type="PROSITE" id="PS00108">
    <property type="entry name" value="PROTEIN_KINASE_ST"/>
    <property type="match status" value="1"/>
</dbReference>
<feature type="chain" id="PRO_0000396644" description="Calcium/calmodulin-dependent protein kinase type II">
    <location>
        <begin position="1"/>
        <end position="533"/>
    </location>
</feature>
<feature type="region of interest" description="Disordered" evidence="7">
    <location>
        <begin position="316"/>
        <end position="347"/>
    </location>
</feature>
<feature type="region of interest" description="Disordered" evidence="7">
    <location>
        <begin position="369"/>
        <end position="400"/>
    </location>
</feature>
<feature type="compositionally biased region" description="Polar residues" evidence="7">
    <location>
        <begin position="316"/>
        <end position="345"/>
    </location>
</feature>
<feature type="compositionally biased region" description="Polar residues" evidence="7">
    <location>
        <begin position="377"/>
        <end position="391"/>
    </location>
</feature>
<feature type="active site" description="Proton acceptor" evidence="3 5 6">
    <location>
        <position position="134"/>
    </location>
</feature>
<feature type="binding site" evidence="3 5">
    <location>
        <begin position="18"/>
        <end position="26"/>
    </location>
    <ligand>
        <name>ATP</name>
        <dbReference type="ChEBI" id="CHEBI:30616"/>
    </ligand>
</feature>
<feature type="binding site" evidence="2 5">
    <location>
        <position position="41"/>
    </location>
    <ligand>
        <name>ATP</name>
        <dbReference type="ChEBI" id="CHEBI:30616"/>
    </ligand>
</feature>
<feature type="modified residue" description="Phosphothreonine; by autocatalysis" evidence="2">
    <location>
        <position position="284"/>
    </location>
</feature>
<evidence type="ECO:0000250" key="1"/>
<evidence type="ECO:0000250" key="2">
    <source>
        <dbReference type="UniProtKB" id="O62305"/>
    </source>
</evidence>
<evidence type="ECO:0000250" key="3">
    <source>
        <dbReference type="UniProtKB" id="P28523"/>
    </source>
</evidence>
<evidence type="ECO:0000255" key="4"/>
<evidence type="ECO:0000255" key="5">
    <source>
        <dbReference type="PROSITE-ProRule" id="PRU00159"/>
    </source>
</evidence>
<evidence type="ECO:0000255" key="6">
    <source>
        <dbReference type="PROSITE-ProRule" id="PRU10027"/>
    </source>
</evidence>
<evidence type="ECO:0000256" key="7">
    <source>
        <dbReference type="SAM" id="MobiDB-lite"/>
    </source>
</evidence>
<evidence type="ECO:0000312" key="8">
    <source>
        <dbReference type="EMBL" id="CAP25104.1"/>
    </source>
</evidence>
<name>KCC2D_CAEBR</name>
<gene>
    <name evidence="8" type="primary">unc-43</name>
    <name type="ORF">CBG04391</name>
</gene>
<comment type="function">
    <text evidence="2">Role in locomotion and neuronal cell fate specification. Required for the regulation of synaptic density, egg laying, defecation, and meiotic maturation. Required for viability under chronic osmotic stress in which it acts downstream of osr-1. Regulates the synaptic trafficking of glr-1. Bidirectional modulator of neurotransmitter release with negative modulatory effects mainly mediated via slo-1 activation. May suppress the functional response to an internal pacemaker, perhaps by modulating the activity of the IP3 receptor (By similarity).</text>
</comment>
<comment type="catalytic activity">
    <reaction evidence="2">
        <text>L-seryl-[protein] + ATP = O-phospho-L-seryl-[protein] + ADP + H(+)</text>
        <dbReference type="Rhea" id="RHEA:17989"/>
        <dbReference type="Rhea" id="RHEA-COMP:9863"/>
        <dbReference type="Rhea" id="RHEA-COMP:11604"/>
        <dbReference type="ChEBI" id="CHEBI:15378"/>
        <dbReference type="ChEBI" id="CHEBI:29999"/>
        <dbReference type="ChEBI" id="CHEBI:30616"/>
        <dbReference type="ChEBI" id="CHEBI:83421"/>
        <dbReference type="ChEBI" id="CHEBI:456216"/>
        <dbReference type="EC" id="2.7.11.17"/>
    </reaction>
</comment>
<comment type="catalytic activity">
    <reaction evidence="2">
        <text>L-threonyl-[protein] + ATP = O-phospho-L-threonyl-[protein] + ADP + H(+)</text>
        <dbReference type="Rhea" id="RHEA:46608"/>
        <dbReference type="Rhea" id="RHEA-COMP:11060"/>
        <dbReference type="Rhea" id="RHEA-COMP:11605"/>
        <dbReference type="ChEBI" id="CHEBI:15378"/>
        <dbReference type="ChEBI" id="CHEBI:30013"/>
        <dbReference type="ChEBI" id="CHEBI:30616"/>
        <dbReference type="ChEBI" id="CHEBI:61977"/>
        <dbReference type="ChEBI" id="CHEBI:456216"/>
        <dbReference type="EC" id="2.7.11.17"/>
    </reaction>
</comment>
<comment type="cofactor">
    <cofactor evidence="2">
        <name>Mg(2+)</name>
        <dbReference type="ChEBI" id="CHEBI:18420"/>
    </cofactor>
</comment>
<comment type="activity regulation">
    <text evidence="1">Ca(2+)/calmodulin binding removes an autoinhibitory regulatory segment located C-terminal to the kinase domain. This releases the catalytic activity of the enzyme and makes accessible a regulatory residue Thr-284. Phosphorylation of Thr-284 by another kinase domain within the oligomeric holoenzyme keeps CaMKII active in the absence of Ca(2+)/calmodulin by preventing the rebinding of the regulatory segment to the kinase domain and by increasing the affinity of calmodulin for the enzyme. Can respond to high-frequency Ca(2+) pulses to become Ca(2+) independent (By similarity).</text>
</comment>
<comment type="subunit">
    <text evidence="2">Dodecamer. Subunits are tightly packed around a central ring-shaped scaffold with extensive contacts between the regulatory segment of one kinase and the catalytic domain of another enabling cooperative activation of a subunit by the adjacent molecule. Interacts with and phosphorylates daf-16; the interaction promotes daf-16 nuclear localization. Interacts with egl-2 and tir-1. Interacts with nsy-1.</text>
</comment>
<comment type="subcellular location">
    <subcellularLocation>
        <location evidence="2">Cytoplasm</location>
    </subcellularLocation>
    <subcellularLocation>
        <location evidence="2">Cell projection</location>
        <location evidence="2">Axon</location>
    </subcellularLocation>
    <subcellularLocation>
        <location evidence="2">Perikaryon</location>
    </subcellularLocation>
    <text evidence="2">Localizes at or near the Golgi apparatus. Localizes to post-synaptic regions and is enriched in punctate structures in axons of AWC neurons where it co-localizes with tir-1. Localization is regulated by tir-1.</text>
</comment>
<comment type="similarity">
    <text evidence="4">Belongs to the protein kinase superfamily. CAMK Ser/Thr protein kinase family. CaMK subfamily.</text>
</comment>
<sequence>MMNACTKFSDNYDVKEELGKGAFSVVRRCVHKTTGLEFAAKIINTKKLSARDFQKLEREARICRKLQHPNIVRLHDSIQEESFHYLVFDLVTGGELFEDIVAREFYSEADASHCIQQILESIAYCHSNGVVHRDLKPENLLLASKAKGAAVKLADFGLAIEVNDSEAWHGFAGTPGYLSPEVLKKDPYSKPVDIWACGVILYILLVGYPPFWDEDQHRLYAQIKAGAYDYPSPEWDTVTPEAKSLIDSMLTVNPKKRITADQALKVPWICNRERVASAIHRQDTVDCLKKFNARRKLKAAISAVKMVTRMSGVLRTSDSTGSVASNGSTTHDTSQIAGTSSQPTSPAAEGAILTTMIATRNLSNLGRNLLNKKEQGPPSTIKESSESSQTIDDNDSEKAQKQDIVRVTQTLLDAISCKDFDTYTRLCDTSMTCFEPEALGNLIEGIEFHRFYFDGNRKNQVHTTMLNPNVHIIGEDAACVAYVKLTQFLDRNGEAHTRQSQESRVWSKKQGRWLCVHVHRSTQPSTNTTVSEF</sequence>
<protein>
    <recommendedName>
        <fullName evidence="2">Calcium/calmodulin-dependent protein kinase type II</fullName>
        <shortName evidence="2">CaM kinase II</shortName>
        <ecNumber>2.7.11.17</ecNumber>
    </recommendedName>
    <alternativeName>
        <fullName>Uncoordinated protein 43</fullName>
    </alternativeName>
</protein>
<reference evidence="8" key="1">
    <citation type="journal article" date="2003" name="PLoS Biol.">
        <title>The genome sequence of Caenorhabditis briggsae: a platform for comparative genomics.</title>
        <authorList>
            <person name="Stein L.D."/>
            <person name="Bao Z."/>
            <person name="Blasiar D."/>
            <person name="Blumenthal T."/>
            <person name="Brent M.R."/>
            <person name="Chen N."/>
            <person name="Chinwalla A."/>
            <person name="Clarke L."/>
            <person name="Clee C."/>
            <person name="Coghlan A."/>
            <person name="Coulson A."/>
            <person name="D'Eustachio P."/>
            <person name="Fitch D.H.A."/>
            <person name="Fulton L.A."/>
            <person name="Fulton R.E."/>
            <person name="Griffiths-Jones S."/>
            <person name="Harris T.W."/>
            <person name="Hillier L.W."/>
            <person name="Kamath R."/>
            <person name="Kuwabara P.E."/>
            <person name="Mardis E.R."/>
            <person name="Marra M.A."/>
            <person name="Miner T.L."/>
            <person name="Minx P."/>
            <person name="Mullikin J.C."/>
            <person name="Plumb R.W."/>
            <person name="Rogers J."/>
            <person name="Schein J.E."/>
            <person name="Sohrmann M."/>
            <person name="Spieth J."/>
            <person name="Stajich J.E."/>
            <person name="Wei C."/>
            <person name="Willey D."/>
            <person name="Wilson R.K."/>
            <person name="Durbin R.M."/>
            <person name="Waterston R.H."/>
        </authorList>
    </citation>
    <scope>NUCLEOTIDE SEQUENCE [LARGE SCALE GENOMIC DNA]</scope>
    <source>
        <strain>AF16</strain>
    </source>
</reference>
<keyword id="KW-0067">ATP-binding</keyword>
<keyword id="KW-0112">Calmodulin-binding</keyword>
<keyword id="KW-0966">Cell projection</keyword>
<keyword id="KW-0963">Cytoplasm</keyword>
<keyword id="KW-0418">Kinase</keyword>
<keyword id="KW-0460">Magnesium</keyword>
<keyword id="KW-0479">Metal-binding</keyword>
<keyword id="KW-0547">Nucleotide-binding</keyword>
<keyword id="KW-0597">Phosphoprotein</keyword>
<keyword id="KW-1185">Reference proteome</keyword>
<keyword id="KW-0723">Serine/threonine-protein kinase</keyword>
<keyword id="KW-0346">Stress response</keyword>
<keyword id="KW-0808">Transferase</keyword>
<proteinExistence type="inferred from homology"/>